<dbReference type="EMBL" id="D85358">
    <property type="protein sequence ID" value="BAA21351.1"/>
    <property type="molecule type" value="Genomic_DNA"/>
</dbReference>
<dbReference type="EMBL" id="AJ000431">
    <property type="protein sequence ID" value="CAA04076.1"/>
    <property type="molecule type" value="Genomic_DNA"/>
</dbReference>
<dbReference type="SMR" id="O79454"/>
<dbReference type="GO" id="GO:0005743">
    <property type="term" value="C:mitochondrial inner membrane"/>
    <property type="evidence" value="ECO:0007669"/>
    <property type="project" value="UniProtKB-SubCell"/>
</dbReference>
<dbReference type="GO" id="GO:0045275">
    <property type="term" value="C:respiratory chain complex III"/>
    <property type="evidence" value="ECO:0007669"/>
    <property type="project" value="InterPro"/>
</dbReference>
<dbReference type="GO" id="GO:0046872">
    <property type="term" value="F:metal ion binding"/>
    <property type="evidence" value="ECO:0007669"/>
    <property type="project" value="UniProtKB-KW"/>
</dbReference>
<dbReference type="GO" id="GO:0008121">
    <property type="term" value="F:ubiquinol-cytochrome-c reductase activity"/>
    <property type="evidence" value="ECO:0007669"/>
    <property type="project" value="InterPro"/>
</dbReference>
<dbReference type="GO" id="GO:0006122">
    <property type="term" value="P:mitochondrial electron transport, ubiquinol to cytochrome c"/>
    <property type="evidence" value="ECO:0007669"/>
    <property type="project" value="TreeGrafter"/>
</dbReference>
<dbReference type="CDD" id="cd00290">
    <property type="entry name" value="cytochrome_b_C"/>
    <property type="match status" value="1"/>
</dbReference>
<dbReference type="CDD" id="cd00284">
    <property type="entry name" value="Cytochrome_b_N"/>
    <property type="match status" value="1"/>
</dbReference>
<dbReference type="FunFam" id="1.20.810.10:FF:000002">
    <property type="entry name" value="Cytochrome b"/>
    <property type="match status" value="1"/>
</dbReference>
<dbReference type="Gene3D" id="1.20.810.10">
    <property type="entry name" value="Cytochrome Bc1 Complex, Chain C"/>
    <property type="match status" value="1"/>
</dbReference>
<dbReference type="InterPro" id="IPR005798">
    <property type="entry name" value="Cyt_b/b6_C"/>
</dbReference>
<dbReference type="InterPro" id="IPR036150">
    <property type="entry name" value="Cyt_b/b6_C_sf"/>
</dbReference>
<dbReference type="InterPro" id="IPR005797">
    <property type="entry name" value="Cyt_b/b6_N"/>
</dbReference>
<dbReference type="InterPro" id="IPR027387">
    <property type="entry name" value="Cytb/b6-like_sf"/>
</dbReference>
<dbReference type="InterPro" id="IPR030689">
    <property type="entry name" value="Cytochrome_b"/>
</dbReference>
<dbReference type="InterPro" id="IPR048260">
    <property type="entry name" value="Cytochrome_b_C_euk/bac"/>
</dbReference>
<dbReference type="InterPro" id="IPR048259">
    <property type="entry name" value="Cytochrome_b_N_euk/bac"/>
</dbReference>
<dbReference type="InterPro" id="IPR016174">
    <property type="entry name" value="Di-haem_cyt_TM"/>
</dbReference>
<dbReference type="PANTHER" id="PTHR19271">
    <property type="entry name" value="CYTOCHROME B"/>
    <property type="match status" value="1"/>
</dbReference>
<dbReference type="PANTHER" id="PTHR19271:SF16">
    <property type="entry name" value="CYTOCHROME B"/>
    <property type="match status" value="1"/>
</dbReference>
<dbReference type="Pfam" id="PF00032">
    <property type="entry name" value="Cytochrom_B_C"/>
    <property type="match status" value="1"/>
</dbReference>
<dbReference type="Pfam" id="PF00033">
    <property type="entry name" value="Cytochrome_B"/>
    <property type="match status" value="1"/>
</dbReference>
<dbReference type="PIRSF" id="PIRSF038885">
    <property type="entry name" value="COB"/>
    <property type="match status" value="1"/>
</dbReference>
<dbReference type="SUPFAM" id="SSF81648">
    <property type="entry name" value="a domain/subunit of cytochrome bc1 complex (Ubiquinol-cytochrome c reductase)"/>
    <property type="match status" value="1"/>
</dbReference>
<dbReference type="SUPFAM" id="SSF81342">
    <property type="entry name" value="Transmembrane di-heme cytochromes"/>
    <property type="match status" value="1"/>
</dbReference>
<dbReference type="PROSITE" id="PS51003">
    <property type="entry name" value="CYTB_CTER"/>
    <property type="match status" value="1"/>
</dbReference>
<dbReference type="PROSITE" id="PS51002">
    <property type="entry name" value="CYTB_NTER"/>
    <property type="match status" value="1"/>
</dbReference>
<geneLocation type="mitochondrion"/>
<gene>
    <name type="primary">MT-CYB</name>
    <name type="synonym">COB</name>
    <name type="synonym">CYTB</name>
    <name type="synonym">MTCYB</name>
</gene>
<name>CYB_SORMI</name>
<comment type="function">
    <text evidence="2">Component of the ubiquinol-cytochrome c reductase complex (complex III or cytochrome b-c1 complex) that is part of the mitochondrial respiratory chain. The b-c1 complex mediates electron transfer from ubiquinol to cytochrome c. Contributes to the generation of a proton gradient across the mitochondrial membrane that is then used for ATP synthesis.</text>
</comment>
<comment type="cofactor">
    <cofactor evidence="2">
        <name>heme b</name>
        <dbReference type="ChEBI" id="CHEBI:60344"/>
    </cofactor>
    <text evidence="2">Binds 2 heme b groups non-covalently.</text>
</comment>
<comment type="subunit">
    <text evidence="2">The cytochrome bc1 complex contains 11 subunits: 3 respiratory subunits (MT-CYB, CYC1 and UQCRFS1), 2 core proteins (UQCRC1 and UQCRC2) and 6 low-molecular weight proteins (UQCRH/QCR6, UQCRB/QCR7, UQCRQ/QCR8, UQCR10/QCR9, UQCR11/QCR10 and a cleavage product of UQCRFS1). This cytochrome bc1 complex then forms a dimer.</text>
</comment>
<comment type="subcellular location">
    <subcellularLocation>
        <location evidence="2">Mitochondrion inner membrane</location>
        <topology evidence="2">Multi-pass membrane protein</topology>
    </subcellularLocation>
</comment>
<comment type="miscellaneous">
    <text evidence="1">Heme 1 (or BL or b562) is low-potential and absorbs at about 562 nm, and heme 2 (or BH or b566) is high-potential and absorbs at about 566 nm.</text>
</comment>
<comment type="similarity">
    <text evidence="3 4">Belongs to the cytochrome b family.</text>
</comment>
<comment type="caution">
    <text evidence="2">The full-length protein contains only eight transmembrane helices, not nine as predicted by bioinformatics tools.</text>
</comment>
<reference key="1">
    <citation type="journal article" date="1997" name="Zool. Sci.">
        <title>Molecular phylogeny from nucleotide sequences of the mitochondrial cytochrome b gene and evolutionary history of Eurasian soricine shrews (Mammalia, Insectivora).</title>
        <authorList>
            <person name="Ohdachi S."/>
            <person name="Masuda R."/>
            <person name="Abe H."/>
            <person name="Adachi J."/>
            <person name="Dokuchaev N.E."/>
            <person name="Haukisalmi V."/>
            <person name="Yoshida M.C."/>
        </authorList>
    </citation>
    <scope>NUCLEOTIDE SEQUENCE [GENOMIC DNA] OF 1-134</scope>
    <source>
        <strain>Isolate #363</strain>
        <tissue>Liver</tissue>
    </source>
</reference>
<reference key="2">
    <citation type="journal article" date="1999" name="Mol. Phylogenet. Evol.">
        <title>Molecular phylogeny and evolution of Sorex shrews (Soricidae: Insectivora) inferred from mitochondrial DNA sequence data.</title>
        <authorList>
            <person name="Fumagalli L."/>
            <person name="Taberlet P."/>
            <person name="Stewart D.T."/>
            <person name="Gielly L."/>
            <person name="Hausser J."/>
            <person name="Vogel P."/>
        </authorList>
    </citation>
    <scope>NUCLEOTIDE SEQUENCE [GENOMIC DNA] OF 44-379</scope>
</reference>
<accession>O79454</accession>
<accession>O21418</accession>
<feature type="chain" id="PRO_0000061569" description="Cytochrome b">
    <location>
        <begin position="1"/>
        <end position="379"/>
    </location>
</feature>
<feature type="transmembrane region" description="Helical" evidence="2">
    <location>
        <begin position="33"/>
        <end position="53"/>
    </location>
</feature>
<feature type="transmembrane region" description="Helical" evidence="2">
    <location>
        <begin position="77"/>
        <end position="98"/>
    </location>
</feature>
<feature type="transmembrane region" description="Helical" evidence="2">
    <location>
        <begin position="113"/>
        <end position="133"/>
    </location>
</feature>
<feature type="transmembrane region" description="Helical" evidence="2">
    <location>
        <begin position="178"/>
        <end position="198"/>
    </location>
</feature>
<feature type="transmembrane region" description="Helical" evidence="2">
    <location>
        <begin position="226"/>
        <end position="246"/>
    </location>
</feature>
<feature type="transmembrane region" description="Helical" evidence="2">
    <location>
        <begin position="288"/>
        <end position="308"/>
    </location>
</feature>
<feature type="transmembrane region" description="Helical" evidence="2">
    <location>
        <begin position="320"/>
        <end position="340"/>
    </location>
</feature>
<feature type="transmembrane region" description="Helical" evidence="2">
    <location>
        <begin position="347"/>
        <end position="367"/>
    </location>
</feature>
<feature type="binding site" description="axial binding residue" evidence="2">
    <location>
        <position position="83"/>
    </location>
    <ligand>
        <name>heme b</name>
        <dbReference type="ChEBI" id="CHEBI:60344"/>
        <label>b562</label>
    </ligand>
    <ligandPart>
        <name>Fe</name>
        <dbReference type="ChEBI" id="CHEBI:18248"/>
    </ligandPart>
</feature>
<feature type="binding site" description="axial binding residue" evidence="2">
    <location>
        <position position="97"/>
    </location>
    <ligand>
        <name>heme b</name>
        <dbReference type="ChEBI" id="CHEBI:60344"/>
        <label>b566</label>
    </ligand>
    <ligandPart>
        <name>Fe</name>
        <dbReference type="ChEBI" id="CHEBI:18248"/>
    </ligandPart>
</feature>
<feature type="binding site" description="axial binding residue" evidence="2">
    <location>
        <position position="182"/>
    </location>
    <ligand>
        <name>heme b</name>
        <dbReference type="ChEBI" id="CHEBI:60344"/>
        <label>b562</label>
    </ligand>
    <ligandPart>
        <name>Fe</name>
        <dbReference type="ChEBI" id="CHEBI:18248"/>
    </ligandPart>
</feature>
<feature type="binding site" description="axial binding residue" evidence="2">
    <location>
        <position position="196"/>
    </location>
    <ligand>
        <name>heme b</name>
        <dbReference type="ChEBI" id="CHEBI:60344"/>
        <label>b566</label>
    </ligand>
    <ligandPart>
        <name>Fe</name>
        <dbReference type="ChEBI" id="CHEBI:18248"/>
    </ligandPart>
</feature>
<feature type="binding site" evidence="2">
    <location>
        <position position="201"/>
    </location>
    <ligand>
        <name>a ubiquinone</name>
        <dbReference type="ChEBI" id="CHEBI:16389"/>
    </ligand>
</feature>
<evidence type="ECO:0000250" key="1"/>
<evidence type="ECO:0000250" key="2">
    <source>
        <dbReference type="UniProtKB" id="P00157"/>
    </source>
</evidence>
<evidence type="ECO:0000255" key="3">
    <source>
        <dbReference type="PROSITE-ProRule" id="PRU00967"/>
    </source>
</evidence>
<evidence type="ECO:0000255" key="4">
    <source>
        <dbReference type="PROSITE-ProRule" id="PRU00968"/>
    </source>
</evidence>
<organism>
    <name type="scientific">Sorex minutus</name>
    <name type="common">Eurasian pygmy shrew</name>
    <dbReference type="NCBI Taxonomy" id="62280"/>
    <lineage>
        <taxon>Eukaryota</taxon>
        <taxon>Metazoa</taxon>
        <taxon>Chordata</taxon>
        <taxon>Craniata</taxon>
        <taxon>Vertebrata</taxon>
        <taxon>Euteleostomi</taxon>
        <taxon>Mammalia</taxon>
        <taxon>Eutheria</taxon>
        <taxon>Laurasiatheria</taxon>
        <taxon>Eulipotyphla</taxon>
        <taxon>Soricidae</taxon>
        <taxon>Soricinae</taxon>
        <taxon>Sorex</taxon>
    </lineage>
</organism>
<keyword id="KW-0249">Electron transport</keyword>
<keyword id="KW-0349">Heme</keyword>
<keyword id="KW-0408">Iron</keyword>
<keyword id="KW-0472">Membrane</keyword>
<keyword id="KW-0479">Metal-binding</keyword>
<keyword id="KW-0496">Mitochondrion</keyword>
<keyword id="KW-0999">Mitochondrion inner membrane</keyword>
<keyword id="KW-0679">Respiratory chain</keyword>
<keyword id="KW-0812">Transmembrane</keyword>
<keyword id="KW-1133">Transmembrane helix</keyword>
<keyword id="KW-0813">Transport</keyword>
<keyword id="KW-0830">Ubiquinone</keyword>
<proteinExistence type="inferred from homology"/>
<protein>
    <recommendedName>
        <fullName>Cytochrome b</fullName>
    </recommendedName>
    <alternativeName>
        <fullName>Complex III subunit 3</fullName>
    </alternativeName>
    <alternativeName>
        <fullName>Complex III subunit III</fullName>
    </alternativeName>
    <alternativeName>
        <fullName>Cytochrome b-c1 complex subunit 3</fullName>
    </alternativeName>
    <alternativeName>
        <fullName>Ubiquinol-cytochrome-c reductase complex cytochrome b subunit</fullName>
    </alternativeName>
</protein>
<sequence>MTNLRKTHPLMKIVNSSFIDLPAPSNISSWWNFGSLLGVCLIIQILTGLFLAMHYTSDTMTAFSSVTHICRDVNYGWLIRYLHANGASMFFICLFLHVGRGLYYGSYMYLETWNIGVLLLFAVMATAFMGYVLPWGQMSFWGATVITNLLSAIPYIGSDLVEWIWGGFSVDKATLTRFFAFHFILPFIIAALAGVHLLFLHETGSNNPSGLSSDADKIPFHPYYTIKDILGVLLLILVLTSLVLFSPDVLGDPDNYTPANPLNTPPHIKPEWYFLFAYAILRSIPNKLGGVLALVLSIVVLALVPFLHTSKQRSIMFRPFSQCLFWILVADLLTLTWIGGQPVEHPFIIIGQLASILYFLLILVIMPITSVSEDNLMKW</sequence>